<evidence type="ECO:0000250" key="1"/>
<evidence type="ECO:0000305" key="2"/>
<sequence>MGKVIGIDLGTTNSCVAVLEGGKPIIVTNREGDRTTPSIVAVGRKGDRIVGRMAKRQAVTNAENTVYSIKRFIGRRWEDTEAERSRVTYTCVPGKDDTVNVTIRDRVCTPQEISAMVLQKLRQDAETFLGEPVTQAVITVPAYFTDAQRQATKDAGAIAGLEVLRIVNEPTAAALSYGLDKLHENSRILVFDLGGSTLDVSILQLGDSVFEVKATAGNNHLGGDDFDAVIVDWLADNFLKAESIDLRQDKMAIQRLREASEQAKIDLSTLPTTTINLPFIATATVDGAPEPKHIEVELQREQFEVLASNLVQATIEPIQQALKDSNLTIDQIDRILLVGGSSRIPAIQQAVQKFFGGKTPDLTINPDEAIALGAAIQAGVLGGEVKDVLLLDVIPLSLGLETLGGVFTKIIERNTTIPTSRTQVFTTATDGQVMVEVHVLQGERALVKDNKSLGRFQLTGIPPAPRGVPQIELAFDIDADGILNVSARDRGTGRAQGIRITSTGGLTSDEIEAMRRDAELYQEADQINLQMIELRTQFENLRYSFESTLQNNRELLTAEQQEPLEASLNALASGLESVSNEAELNQLRQQLEALKQQLYAIGAAAYRQDGSVTTIPVQPTFADLIGDNDNGSNETVAIERNDDDATVTADYEAIE</sequence>
<proteinExistence type="inferred from homology"/>
<accession>P50020</accession>
<accession>Q31LG6</accession>
<keyword id="KW-0067">ATP-binding</keyword>
<keyword id="KW-0143">Chaperone</keyword>
<keyword id="KW-0547">Nucleotide-binding</keyword>
<keyword id="KW-0597">Phosphoprotein</keyword>
<keyword id="KW-1185">Reference proteome</keyword>
<keyword id="KW-0346">Stress response</keyword>
<name>DNAK1_SYNE7</name>
<organism>
    <name type="scientific">Synechococcus elongatus (strain ATCC 33912 / PCC 7942 / FACHB-805)</name>
    <name type="common">Anacystis nidulans R2</name>
    <dbReference type="NCBI Taxonomy" id="1140"/>
    <lineage>
        <taxon>Bacteria</taxon>
        <taxon>Bacillati</taxon>
        <taxon>Cyanobacteriota</taxon>
        <taxon>Cyanophyceae</taxon>
        <taxon>Synechococcales</taxon>
        <taxon>Synechococcaceae</taxon>
        <taxon>Synechococcus</taxon>
    </lineage>
</organism>
<protein>
    <recommendedName>
        <fullName>Chaperone protein dnaK1</fullName>
    </recommendedName>
    <alternativeName>
        <fullName>HSP70-1</fullName>
    </alternativeName>
    <alternativeName>
        <fullName>Heat shock 70 kDa protein 1</fullName>
    </alternativeName>
    <alternativeName>
        <fullName>Heat shock protein 70-1</fullName>
    </alternativeName>
</protein>
<reference key="1">
    <citation type="journal article" date="1994" name="Biochem. Biophys. Res. Commun.">
        <title>Identification of dnaK multigene family in Synechococcus sp. PCC7942.</title>
        <authorList>
            <person name="Nimura K."/>
            <person name="Yoshikawa H."/>
            <person name="Takahashi H."/>
        </authorList>
    </citation>
    <scope>NUCLEOTIDE SEQUENCE [GENOMIC DNA]</scope>
</reference>
<reference key="2">
    <citation type="submission" date="2005-08" db="EMBL/GenBank/DDBJ databases">
        <title>Complete sequence of chromosome 1 of Synechococcus elongatus PCC 7942.</title>
        <authorList>
            <consortium name="US DOE Joint Genome Institute"/>
            <person name="Copeland A."/>
            <person name="Lucas S."/>
            <person name="Lapidus A."/>
            <person name="Barry K."/>
            <person name="Detter J.C."/>
            <person name="Glavina T."/>
            <person name="Hammon N."/>
            <person name="Israni S."/>
            <person name="Pitluck S."/>
            <person name="Schmutz J."/>
            <person name="Larimer F."/>
            <person name="Land M."/>
            <person name="Kyrpides N."/>
            <person name="Lykidis A."/>
            <person name="Golden S."/>
            <person name="Richardson P."/>
        </authorList>
    </citation>
    <scope>NUCLEOTIDE SEQUENCE [LARGE SCALE GENOMIC DNA]</scope>
    <source>
        <strain>ATCC 33912 / PCC 7942 / FACHB-805</strain>
    </source>
</reference>
<gene>
    <name type="primary">dnaK1</name>
    <name type="ordered locus">Synpcc7942_2073</name>
</gene>
<feature type="chain" id="PRO_0000078563" description="Chaperone protein dnaK1">
    <location>
        <begin position="1"/>
        <end position="655"/>
    </location>
</feature>
<feature type="modified residue" description="Phosphothreonine; by autocatalysis" evidence="1">
    <location>
        <position position="197"/>
    </location>
</feature>
<feature type="sequence conflict" description="In Ref. 1; BAA05903." evidence="2" ref="1">
    <original>V</original>
    <variation>F</variation>
    <location>
        <position position="107"/>
    </location>
</feature>
<feature type="sequence conflict" description="In Ref. 1; BAA05903." evidence="2" ref="1">
    <original>D</original>
    <variation>G</variation>
    <location>
        <position position="476"/>
    </location>
</feature>
<feature type="sequence conflict" description="In Ref. 1; BAA05903." evidence="2" ref="1">
    <original>S</original>
    <variation>G</variation>
    <location>
        <position position="508"/>
    </location>
</feature>
<comment type="function">
    <text evidence="1">Acts as a chaperone.</text>
</comment>
<comment type="similarity">
    <text evidence="2">Belongs to the heat shock protein 70 family.</text>
</comment>
<dbReference type="EMBL" id="D28550">
    <property type="protein sequence ID" value="BAA05903.1"/>
    <property type="molecule type" value="Genomic_DNA"/>
</dbReference>
<dbReference type="EMBL" id="CP000100">
    <property type="protein sequence ID" value="ABB58103.1"/>
    <property type="molecule type" value="Genomic_DNA"/>
</dbReference>
<dbReference type="PIR" id="JC2238">
    <property type="entry name" value="JC2238"/>
</dbReference>
<dbReference type="RefSeq" id="WP_011378303.1">
    <property type="nucleotide sequence ID" value="NC_007604.1"/>
</dbReference>
<dbReference type="SMR" id="P50020"/>
<dbReference type="STRING" id="1140.Synpcc7942_2073"/>
<dbReference type="PaxDb" id="1140-Synpcc7942_2073"/>
<dbReference type="KEGG" id="syf:Synpcc7942_2073"/>
<dbReference type="eggNOG" id="COG0443">
    <property type="taxonomic scope" value="Bacteria"/>
</dbReference>
<dbReference type="HOGENOM" id="CLU_005965_2_1_3"/>
<dbReference type="OrthoDB" id="9766019at2"/>
<dbReference type="BioCyc" id="SYNEL:SYNPCC7942_2073-MONOMER"/>
<dbReference type="Proteomes" id="UP000889800">
    <property type="component" value="Chromosome"/>
</dbReference>
<dbReference type="GO" id="GO:0005524">
    <property type="term" value="F:ATP binding"/>
    <property type="evidence" value="ECO:0007669"/>
    <property type="project" value="UniProtKB-UniRule"/>
</dbReference>
<dbReference type="GO" id="GO:0140662">
    <property type="term" value="F:ATP-dependent protein folding chaperone"/>
    <property type="evidence" value="ECO:0007669"/>
    <property type="project" value="InterPro"/>
</dbReference>
<dbReference type="GO" id="GO:0051082">
    <property type="term" value="F:unfolded protein binding"/>
    <property type="evidence" value="ECO:0007669"/>
    <property type="project" value="InterPro"/>
</dbReference>
<dbReference type="GO" id="GO:0051301">
    <property type="term" value="P:cell division"/>
    <property type="evidence" value="ECO:0007669"/>
    <property type="project" value="InterPro"/>
</dbReference>
<dbReference type="CDD" id="cd10234">
    <property type="entry name" value="ASKHA_NBD_HSP70_DnaK-like"/>
    <property type="match status" value="1"/>
</dbReference>
<dbReference type="FunFam" id="2.60.34.10:FF:000014">
    <property type="entry name" value="Chaperone protein DnaK HSP70"/>
    <property type="match status" value="1"/>
</dbReference>
<dbReference type="FunFam" id="3.30.420.40:FF:000004">
    <property type="entry name" value="Molecular chaperone DnaK"/>
    <property type="match status" value="1"/>
</dbReference>
<dbReference type="FunFam" id="3.90.640.10:FF:000003">
    <property type="entry name" value="Molecular chaperone DnaK"/>
    <property type="match status" value="1"/>
</dbReference>
<dbReference type="Gene3D" id="3.30.420.40">
    <property type="match status" value="2"/>
</dbReference>
<dbReference type="Gene3D" id="3.90.640.10">
    <property type="entry name" value="Actin, Chain A, domain 4"/>
    <property type="match status" value="1"/>
</dbReference>
<dbReference type="Gene3D" id="2.60.34.10">
    <property type="entry name" value="Substrate Binding Domain Of DNAk, Chain A, domain 1"/>
    <property type="match status" value="1"/>
</dbReference>
<dbReference type="HAMAP" id="MF_00332">
    <property type="entry name" value="DnaK"/>
    <property type="match status" value="1"/>
</dbReference>
<dbReference type="InterPro" id="IPR043129">
    <property type="entry name" value="ATPase_NBD"/>
</dbReference>
<dbReference type="InterPro" id="IPR012725">
    <property type="entry name" value="Chaperone_DnaK"/>
</dbReference>
<dbReference type="InterPro" id="IPR018181">
    <property type="entry name" value="Heat_shock_70_CS"/>
</dbReference>
<dbReference type="InterPro" id="IPR029047">
    <property type="entry name" value="HSP70_peptide-bd_sf"/>
</dbReference>
<dbReference type="InterPro" id="IPR013126">
    <property type="entry name" value="Hsp_70_fam"/>
</dbReference>
<dbReference type="InterPro" id="IPR003494">
    <property type="entry name" value="SHS2_FtsA"/>
</dbReference>
<dbReference type="NCBIfam" id="NF001413">
    <property type="entry name" value="PRK00290.1"/>
    <property type="match status" value="1"/>
</dbReference>
<dbReference type="NCBIfam" id="NF009947">
    <property type="entry name" value="PRK13411.1"/>
    <property type="match status" value="1"/>
</dbReference>
<dbReference type="NCBIfam" id="TIGR02350">
    <property type="entry name" value="prok_dnaK"/>
    <property type="match status" value="1"/>
</dbReference>
<dbReference type="PANTHER" id="PTHR19375">
    <property type="entry name" value="HEAT SHOCK PROTEIN 70KDA"/>
    <property type="match status" value="1"/>
</dbReference>
<dbReference type="Pfam" id="PF00012">
    <property type="entry name" value="HSP70"/>
    <property type="match status" value="1"/>
</dbReference>
<dbReference type="PRINTS" id="PR00301">
    <property type="entry name" value="HEATSHOCK70"/>
</dbReference>
<dbReference type="SMART" id="SM00842">
    <property type="entry name" value="FtsA"/>
    <property type="match status" value="1"/>
</dbReference>
<dbReference type="SUPFAM" id="SSF53067">
    <property type="entry name" value="Actin-like ATPase domain"/>
    <property type="match status" value="2"/>
</dbReference>
<dbReference type="SUPFAM" id="SSF100920">
    <property type="entry name" value="Heat shock protein 70kD (HSP70), peptide-binding domain"/>
    <property type="match status" value="1"/>
</dbReference>
<dbReference type="PROSITE" id="PS00297">
    <property type="entry name" value="HSP70_1"/>
    <property type="match status" value="1"/>
</dbReference>
<dbReference type="PROSITE" id="PS00329">
    <property type="entry name" value="HSP70_2"/>
    <property type="match status" value="1"/>
</dbReference>
<dbReference type="PROSITE" id="PS01036">
    <property type="entry name" value="HSP70_3"/>
    <property type="match status" value="1"/>
</dbReference>